<proteinExistence type="evidence at protein level"/>
<evidence type="ECO:0000256" key="1">
    <source>
        <dbReference type="SAM" id="MobiDB-lite"/>
    </source>
</evidence>
<evidence type="ECO:0000269" key="2">
    <source>
    </source>
</evidence>
<evidence type="ECO:0000269" key="3">
    <source>
    </source>
</evidence>
<evidence type="ECO:0000303" key="4">
    <source>
    </source>
</evidence>
<evidence type="ECO:0000305" key="5"/>
<evidence type="ECO:0000312" key="6">
    <source>
        <dbReference type="EMBL" id="CZU00080.1"/>
    </source>
</evidence>
<evidence type="ECO:0000312" key="7">
    <source>
        <dbReference type="Proteomes" id="UP000001450"/>
    </source>
</evidence>
<protein>
    <recommendedName>
        <fullName evidence="4">Metacaspase-2</fullName>
        <ecNumber evidence="2 3">3.4.22.-</ecNumber>
    </recommendedName>
    <alternativeName>
        <fullName evidence="4">PfMCA2</fullName>
    </alternativeName>
</protein>
<name>MCA2_PLAF7</name>
<reference evidence="7" key="1">
    <citation type="journal article" date="2002" name="Nature">
        <title>Genome sequence of the human malaria parasite Plasmodium falciparum.</title>
        <authorList>
            <person name="Gardner M.J."/>
            <person name="Hall N."/>
            <person name="Fung E."/>
            <person name="White O."/>
            <person name="Berriman M."/>
            <person name="Hyman R.W."/>
            <person name="Carlton J.M."/>
            <person name="Pain A."/>
            <person name="Nelson K.E."/>
            <person name="Bowman S."/>
            <person name="Paulsen I.T."/>
            <person name="James K.D."/>
            <person name="Eisen J.A."/>
            <person name="Rutherford K.M."/>
            <person name="Salzberg S.L."/>
            <person name="Craig A."/>
            <person name="Kyes S."/>
            <person name="Chan M.-S."/>
            <person name="Nene V."/>
            <person name="Shallom S.J."/>
            <person name="Suh B."/>
            <person name="Peterson J."/>
            <person name="Angiuoli S."/>
            <person name="Pertea M."/>
            <person name="Allen J."/>
            <person name="Selengut J."/>
            <person name="Haft D."/>
            <person name="Mather M.W."/>
            <person name="Vaidya A.B."/>
            <person name="Martin D.M.A."/>
            <person name="Fairlamb A.H."/>
            <person name="Fraunholz M.J."/>
            <person name="Roos D.S."/>
            <person name="Ralph S.A."/>
            <person name="McFadden G.I."/>
            <person name="Cummings L.M."/>
            <person name="Subramanian G.M."/>
            <person name="Mungall C."/>
            <person name="Venter J.C."/>
            <person name="Carucci D.J."/>
            <person name="Hoffman S.L."/>
            <person name="Newbold C."/>
            <person name="Davis R.W."/>
            <person name="Fraser C.M."/>
            <person name="Barrell B.G."/>
        </authorList>
    </citation>
    <scope>NUCLEOTIDE SEQUENCE [LARGE SCALE GENOMIC DNA]</scope>
    <source>
        <strain evidence="7">3D7</strain>
    </source>
</reference>
<reference evidence="5" key="2">
    <citation type="journal article" date="2018" name="Mol. Biochem. Parasitol.">
        <title>Biochemical characterization of unusual cysteine protease of P. falciparum, metacaspase-2 (MCA-2).</title>
        <authorList>
            <person name="Vandana X."/>
            <person name="Singh A.P."/>
            <person name="Singh J."/>
            <person name="Sharma R."/>
            <person name="Akhter M."/>
            <person name="Mishra P.K."/>
            <person name="Saxena A.K."/>
            <person name="Dixit R."/>
            <person name="Rathi B."/>
            <person name="Katyal A."/>
            <person name="Pandey K.C."/>
        </authorList>
    </citation>
    <scope>FUNCTION</scope>
    <scope>CATALYTIC ACTIVITY</scope>
    <scope>ACTIVITY REGULATION</scope>
    <scope>BIOPHYSICOCHEMICAL PROPERTIES</scope>
    <scope>SUBCELLULAR LOCATION</scope>
    <scope>DEVELOPMENTAL STAGE</scope>
    <scope>INDUCTION</scope>
</reference>
<reference evidence="5" key="3">
    <citation type="journal article" date="2020" name="Biochem. J.">
        <title>A nonpeptidyl molecule modulates apoptosis-like cell death by inhibiting P. falciparum metacaspase-2.</title>
        <authorList>
            <person name="Vandana X."/>
            <person name="Shankar S."/>
            <person name="Prasad K.M."/>
            <person name="Kashif M."/>
            <person name="Kalia I."/>
            <person name="Rai R."/>
            <person name="Singh A.P."/>
            <person name="Pandey K.C."/>
        </authorList>
    </citation>
    <scope>FUNCTION</scope>
    <scope>CATALYTIC ACTIVITY</scope>
    <scope>DEVELOPMENTAL STAGE</scope>
</reference>
<comment type="function">
    <text evidence="2 3">Protease that cleaves specifically after arginine or lysine residues (PubMed:29317266, PubMed:32202613). May play a role in parasite growth and/or development (PubMed:29317266, PubMed:32202613).</text>
</comment>
<comment type="activity regulation">
    <text evidence="2">Ca(2+) does not appear to affect catalytic activity.</text>
</comment>
<comment type="biophysicochemical properties">
    <phDependence>
        <text evidence="2">Optimum pH is 7.5.</text>
    </phDependence>
</comment>
<comment type="subcellular location">
    <subcellularLocation>
        <location evidence="2">Cytoplasm</location>
    </subcellularLocation>
</comment>
<comment type="developmental stage">
    <text evidence="2 3">Expressed during the parasite blood stage, specifically in schizonts, and gametocytes (at protein level).</text>
</comment>
<comment type="induction">
    <text evidence="2">Up-regulated by oxidative stress.</text>
</comment>
<comment type="similarity">
    <text evidence="5">Belongs to the peptidase C14B family.</text>
</comment>
<comment type="caution">
    <text evidence="5">In contrast to other metacaspases of the peptidase C14B family, the catalytic histidine and cysteine residues do not appear to be conserved.</text>
</comment>
<dbReference type="EC" id="3.4.22.-" evidence="2 3"/>
<dbReference type="EMBL" id="LN999946">
    <property type="protein sequence ID" value="CZU00080.1"/>
    <property type="molecule type" value="Genomic_DNA"/>
</dbReference>
<dbReference type="RefSeq" id="XP_001348537.2">
    <property type="nucleotide sequence ID" value="XM_001348501.2"/>
</dbReference>
<dbReference type="SMR" id="Q8IL84"/>
<dbReference type="FunCoup" id="Q8IL84">
    <property type="interactions" value="532"/>
</dbReference>
<dbReference type="IntAct" id="Q8IL84">
    <property type="interactions" value="1"/>
</dbReference>
<dbReference type="PaxDb" id="5833-PF14_0363"/>
<dbReference type="EnsemblProtists" id="CZU00080">
    <property type="protein sequence ID" value="CZU00080"/>
    <property type="gene ID" value="PF3D7_1438400"/>
</dbReference>
<dbReference type="GeneID" id="811945"/>
<dbReference type="KEGG" id="pfa:PF3D7_1438400"/>
<dbReference type="VEuPathDB" id="PlasmoDB:PF3D7_1438400"/>
<dbReference type="HOGENOM" id="CLU_233595_0_0_1"/>
<dbReference type="InParanoid" id="Q8IL84"/>
<dbReference type="OMA" id="FLCNENT"/>
<dbReference type="OrthoDB" id="3223806at2759"/>
<dbReference type="PhylomeDB" id="Q8IL84"/>
<dbReference type="Proteomes" id="UP000001450">
    <property type="component" value="Chromosome 14"/>
</dbReference>
<dbReference type="GO" id="GO:0005737">
    <property type="term" value="C:cytoplasm"/>
    <property type="evidence" value="ECO:0000314"/>
    <property type="project" value="UniProtKB"/>
</dbReference>
<dbReference type="GO" id="GO:0004197">
    <property type="term" value="F:cysteine-type endopeptidase activity"/>
    <property type="evidence" value="ECO:0000318"/>
    <property type="project" value="GO_Central"/>
</dbReference>
<dbReference type="GO" id="GO:0008233">
    <property type="term" value="F:peptidase activity"/>
    <property type="evidence" value="ECO:0000314"/>
    <property type="project" value="UniProtKB"/>
</dbReference>
<dbReference type="GO" id="GO:0006508">
    <property type="term" value="P:proteolysis"/>
    <property type="evidence" value="ECO:0000314"/>
    <property type="project" value="UniProtKB"/>
</dbReference>
<dbReference type="Gene3D" id="3.40.50.12660">
    <property type="match status" value="1"/>
</dbReference>
<dbReference type="InterPro" id="IPR050452">
    <property type="entry name" value="Metacaspase"/>
</dbReference>
<dbReference type="PANTHER" id="PTHR48104:SF30">
    <property type="entry name" value="METACASPASE-1"/>
    <property type="match status" value="1"/>
</dbReference>
<dbReference type="PANTHER" id="PTHR48104">
    <property type="entry name" value="METACASPASE-4"/>
    <property type="match status" value="1"/>
</dbReference>
<sequence length="2020" mass="237831">MNSMNTYSPLYSSYENINIYKKNRKFEEDNYETSTANISCDSKGRILVKESENDRNESIQKKQMLSSMDNRKTNKSEKHNISSYYKMRKKASNHLKDKEKLNNNIIYAKNPHANRYDKYYSLNMNIMNNMNNMNNMNNVNNMNNVNNMNNVNNMNNMNNVNNMNNMNNVNNMNNVKSMYNNNNNSNVYYRISRQNINGKERLLNRYNIMRPQRSADMLIRNYLYNDLPYEINQQNLNKNINDNNAGSFDNLNKTVFENYNKNILDEYNRNIMQYYNSNLKNYRNSSFDNIYTRYNNNNNNNNVYSNNNVYSNNNIYNNNNNNDNINNSFQFSKQEGLMKIYSNNNRNMNDYVVKTSNITRAADNTCAQEQINIPTYNKTVLLKSSPNTENTFNKTLSNILKEQPKRSSMFSFNSSDFFKDFGKLRKNFVGKKKNKINKDIVINGNIFNNKIIDNNTSNAKSEGNSTLHKIYNFIFPSSVKKLQKKKQKLQVIEDKEKNSNRAVVMPLKNKIIYINDANITNDKFKHSFENYNYHQTNIPFVSVTNYMNKDSTKNVRSFSSFDVKERISPRVIRNGNINNNKNNNINNNNNNINNNNNNINNNNNNINNNNNINNNNNINNNNNINNNNNINNNNINNINNINNDFVNDSNINKTVNIHNNNNNLNNYSNTMKSVAKNTQKLSAQKNSLVNDKHHTYHEKLITNIYQFTGGQSQKSCNIKNQNVKEEKINNTQISYINNTAYNDYTNLPNVETYVLSEKSNNLENKEDNNINEKFKNDNNVDKKNNDENNIIKHNVNQNNNEVIVMNNQTEEQINDNKFIKPLNNITGIDPKKKNIYNTVMHINDKMDLNKHDYNYNYNNIIPHNYINSSDKMTNNSLHINKKADDIFQNMISNNDTNVPCVYVNKYINNIFQNNNPSNVTNYINTINMNKAPITIDENSNKLDNNINYENVTKNMIYNNYTNNNVLYITKEKSDNKLNNSTNHLNDLKNNYYVINPSLLYIHNNNNNIEWNKQYTNNFSKPNFLDKFFYEKKVESIQPHHLNQYYYNNQNVKYNPSHINILENKYVNQFTNQNENSLYNFTTHHNNIKNNNIDNILLLDKAIRNQSIYYNNNKGDDETKSAEHTTNPSINLLKNNYEDKNKSNYVHSIVSITDKDNSIYAKNKYAEVVTKNNEKREDAIHKKDEQYIFNNNDNNNDNIHNNNIHNNIHNNIHNNIHNNIHNNIHNNIHNNIHNNIHNNIHNNIHNNIDVSSRENFFQHDIQNTNQINNKTILDITQNEKPNATNEKCLDINNKEKKKKKIKSVHYDMDEILSLKCKVYDELDTCLKCINNLTKNKKLYEQLKKYKHKLDKDTKTKKLYDECTSEKTGSYYTMKDSYISSLLCNEYKLNHILNKSNNKVSDDKHILSYNHHHNKNNNINDINNIKHISKFVNKDNEKTLNNINILNHNNKDPNSGVFLPSDNTESVIYNMNRNRKLCDNNFNVSKHVLYKDSKGTDSTRTNFYDDYSMSYVKSNVDNVEKKEKIKNNINISDKYFLSETDSPYIGKKKALMITLNYNGLLEGCVNDTVDMCDHLMQRFGFNDFILLNDCNLCYRNFVTQKANKKNILSNLHNFIVNSNNGDILFFYFCGYSIKLIDSKFTENYNFALLPQDHSKNNYIYSNEIFNIIKKLQGGKQLCIIFDTTYTSYFVPVPTSITYNKNMNTTEIYKYNNFSSNQKYLKSLKTFGKIRDRNVDSIFVENIKKPLLYEIYKKENDTNTNDKIILVPSIFFFSPDCNDRNDFEFSIKNKVRGLLTYCLGKAIELLKNDFSYHDLFVAASQILIDIKKEYNLKYVKFKLSFLNEYSPDDIKFLSHESLFLKKKLQLDEPLWKPSLKLNNLNQYIQDICNMDERKMLKSSKKKCLLIFIKDIKFYTYKNIDTKNEYFVSCFIKNKNVNILCVRRNNTKEQRIVQDKIFFLEYITLNVTHMENANIYVELFKKKKKNYFVARSIFNIRNVNGKFSLSDEKKNIIGIIDLNIKCVS</sequence>
<keyword id="KW-0963">Cytoplasm</keyword>
<keyword id="KW-0378">Hydrolase</keyword>
<keyword id="KW-0645">Protease</keyword>
<keyword id="KW-1185">Reference proteome</keyword>
<gene>
    <name evidence="4" type="primary">MCA2</name>
    <name evidence="6" type="ORF">PF3D7_1438400</name>
</gene>
<accession>Q8IL84</accession>
<feature type="chain" id="PRO_0000451188" description="Metacaspase-2">
    <location>
        <begin position="1"/>
        <end position="2020"/>
    </location>
</feature>
<feature type="region of interest" description="Disordered" evidence="1">
    <location>
        <begin position="51"/>
        <end position="78"/>
    </location>
</feature>
<feature type="region of interest" description="Disordered" evidence="1">
    <location>
        <begin position="573"/>
        <end position="614"/>
    </location>
</feature>
<feature type="compositionally biased region" description="Basic and acidic residues" evidence="1">
    <location>
        <begin position="51"/>
        <end position="60"/>
    </location>
</feature>
<feature type="compositionally biased region" description="Basic and acidic residues" evidence="1">
    <location>
        <begin position="69"/>
        <end position="78"/>
    </location>
</feature>
<feature type="compositionally biased region" description="Low complexity" evidence="1">
    <location>
        <begin position="576"/>
        <end position="614"/>
    </location>
</feature>
<organism evidence="7">
    <name type="scientific">Plasmodium falciparum (isolate 3D7)</name>
    <dbReference type="NCBI Taxonomy" id="36329"/>
    <lineage>
        <taxon>Eukaryota</taxon>
        <taxon>Sar</taxon>
        <taxon>Alveolata</taxon>
        <taxon>Apicomplexa</taxon>
        <taxon>Aconoidasida</taxon>
        <taxon>Haemosporida</taxon>
        <taxon>Plasmodiidae</taxon>
        <taxon>Plasmodium</taxon>
        <taxon>Plasmodium (Laverania)</taxon>
    </lineage>
</organism>